<evidence type="ECO:0000250" key="1"/>
<evidence type="ECO:0000255" key="2"/>
<evidence type="ECO:0000305" key="3"/>
<protein>
    <recommendedName>
        <fullName>Cytochrome P450 750A1</fullName>
        <ecNumber>1.14.-.-</ecNumber>
    </recommendedName>
    <alternativeName>
        <fullName>Cytochrome P450 CYPC</fullName>
    </alternativeName>
</protein>
<accession>Q50EK4</accession>
<reference key="1">
    <citation type="journal article" date="2005" name="Proc. Natl. Acad. Sci. U.S.A.">
        <title>Loblolly pine abietadienol/abietadienal oxidase PtAO (CYP720B1) is a multifunctional, multisubstrate cytochrome P450 monooxygenase.</title>
        <authorList>
            <person name="Ro D.-K."/>
            <person name="Arimura G."/>
            <person name="Lau S.Y.W."/>
            <person name="Piers E."/>
            <person name="Bohlmann J."/>
        </authorList>
    </citation>
    <scope>NUCLEOTIDE SEQUENCE [MRNA]</scope>
</reference>
<feature type="chain" id="PRO_0000352519" description="Cytochrome P450 750A1">
    <location>
        <begin position="1"/>
        <end position="525"/>
    </location>
</feature>
<feature type="transmembrane region" description="Helical" evidence="2">
    <location>
        <begin position="13"/>
        <end position="33"/>
    </location>
</feature>
<feature type="binding site" description="axial binding residue" evidence="1">
    <location>
        <position position="465"/>
    </location>
    <ligand>
        <name>heme</name>
        <dbReference type="ChEBI" id="CHEBI:30413"/>
    </ligand>
    <ligandPart>
        <name>Fe</name>
        <dbReference type="ChEBI" id="CHEBI:18248"/>
    </ligandPart>
</feature>
<keyword id="KW-0349">Heme</keyword>
<keyword id="KW-0408">Iron</keyword>
<keyword id="KW-0472">Membrane</keyword>
<keyword id="KW-0479">Metal-binding</keyword>
<keyword id="KW-0503">Monooxygenase</keyword>
<keyword id="KW-0560">Oxidoreductase</keyword>
<keyword id="KW-0812">Transmembrane</keyword>
<keyword id="KW-1133">Transmembrane helix</keyword>
<gene>
    <name type="primary">CYP750A1</name>
</gene>
<sequence>MSFDKLLQALPPPLPLPAILIATFIFFFSCWILHQSQRNERLPPGPYPWPIIGNFHQVRLPLHRTLKNLAEKYGPILFLRFGSVPTVVVSSSEKAKHFLKTHDLIFASRPPTSVGKYFFYNFKDIAFSPYGDHWRKMRKICVLELLTSKRIESFKHVRQEELSAMIHSIWEESESGRIAVNVSKAISTSLANILWRILARKKFSDNDLGADGKGFADLVVEVSIAVGSLNIGDFIPYLDCLDLQGIKRALKKANARFDAFAEKMIDEHINASTIRNGEADAGCHVKDIIDVLLEMAKNDNTGAKVTREIIKAITYELFSAGMETSANVLEWAMSELLRHPHAMKKLQQEIESVVGQQGTVKESDLASIVYLHCVVKETLRLYPSLPLALPHESLEAVTVGGYYIPKKTMVIMNLWAIGRDPSVWGADASEFKPERFMQMEENGIDLSGGQSDFRMLPFGAGRRTCPGSAMAILTVEFTLAQLLHTFDWRVEGDPSELDMKEACATKMPRQTPLLAYPRLRLPRCP</sequence>
<proteinExistence type="evidence at transcript level"/>
<dbReference type="EC" id="1.14.-.-"/>
<dbReference type="EMBL" id="AY779539">
    <property type="protein sequence ID" value="AAX07433.1"/>
    <property type="molecule type" value="mRNA"/>
</dbReference>
<dbReference type="SMR" id="Q50EK4"/>
<dbReference type="BRENDA" id="1.14.14.145">
    <property type="organism ID" value="4861"/>
</dbReference>
<dbReference type="GO" id="GO:0016020">
    <property type="term" value="C:membrane"/>
    <property type="evidence" value="ECO:0007669"/>
    <property type="project" value="UniProtKB-SubCell"/>
</dbReference>
<dbReference type="GO" id="GO:0020037">
    <property type="term" value="F:heme binding"/>
    <property type="evidence" value="ECO:0007669"/>
    <property type="project" value="InterPro"/>
</dbReference>
<dbReference type="GO" id="GO:0005506">
    <property type="term" value="F:iron ion binding"/>
    <property type="evidence" value="ECO:0007669"/>
    <property type="project" value="InterPro"/>
</dbReference>
<dbReference type="GO" id="GO:0004497">
    <property type="term" value="F:monooxygenase activity"/>
    <property type="evidence" value="ECO:0007669"/>
    <property type="project" value="UniProtKB-KW"/>
</dbReference>
<dbReference type="GO" id="GO:0016705">
    <property type="term" value="F:oxidoreductase activity, acting on paired donors, with incorporation or reduction of molecular oxygen"/>
    <property type="evidence" value="ECO:0007669"/>
    <property type="project" value="InterPro"/>
</dbReference>
<dbReference type="CDD" id="cd11072">
    <property type="entry name" value="CYP71-like"/>
    <property type="match status" value="1"/>
</dbReference>
<dbReference type="FunFam" id="1.10.630.10:FF:000011">
    <property type="entry name" value="Cytochrome P450 83B1"/>
    <property type="match status" value="1"/>
</dbReference>
<dbReference type="Gene3D" id="1.10.630.10">
    <property type="entry name" value="Cytochrome P450"/>
    <property type="match status" value="1"/>
</dbReference>
<dbReference type="InterPro" id="IPR001128">
    <property type="entry name" value="Cyt_P450"/>
</dbReference>
<dbReference type="InterPro" id="IPR017972">
    <property type="entry name" value="Cyt_P450_CS"/>
</dbReference>
<dbReference type="InterPro" id="IPR002401">
    <property type="entry name" value="Cyt_P450_E_grp-I"/>
</dbReference>
<dbReference type="InterPro" id="IPR036396">
    <property type="entry name" value="Cyt_P450_sf"/>
</dbReference>
<dbReference type="PANTHER" id="PTHR47944">
    <property type="entry name" value="CYTOCHROME P450 98A9"/>
    <property type="match status" value="1"/>
</dbReference>
<dbReference type="PANTHER" id="PTHR47944:SF16">
    <property type="entry name" value="CYTOCHROME P450 FAMILY 1 SUBFAMILY A POLYPEPTIDE 1"/>
    <property type="match status" value="1"/>
</dbReference>
<dbReference type="Pfam" id="PF00067">
    <property type="entry name" value="p450"/>
    <property type="match status" value="1"/>
</dbReference>
<dbReference type="PRINTS" id="PR00463">
    <property type="entry name" value="EP450I"/>
</dbReference>
<dbReference type="PRINTS" id="PR00385">
    <property type="entry name" value="P450"/>
</dbReference>
<dbReference type="SUPFAM" id="SSF48264">
    <property type="entry name" value="Cytochrome P450"/>
    <property type="match status" value="1"/>
</dbReference>
<dbReference type="PROSITE" id="PS00086">
    <property type="entry name" value="CYTOCHROME_P450"/>
    <property type="match status" value="1"/>
</dbReference>
<comment type="cofactor">
    <cofactor evidence="1">
        <name>heme</name>
        <dbReference type="ChEBI" id="CHEBI:30413"/>
    </cofactor>
</comment>
<comment type="subcellular location">
    <subcellularLocation>
        <location evidence="3">Membrane</location>
        <topology evidence="3">Single-pass membrane protein</topology>
    </subcellularLocation>
</comment>
<comment type="similarity">
    <text evidence="3">Belongs to the cytochrome P450 family.</text>
</comment>
<organism>
    <name type="scientific">Pinus taeda</name>
    <name type="common">Loblolly pine</name>
    <dbReference type="NCBI Taxonomy" id="3352"/>
    <lineage>
        <taxon>Eukaryota</taxon>
        <taxon>Viridiplantae</taxon>
        <taxon>Streptophyta</taxon>
        <taxon>Embryophyta</taxon>
        <taxon>Tracheophyta</taxon>
        <taxon>Spermatophyta</taxon>
        <taxon>Pinopsida</taxon>
        <taxon>Pinidae</taxon>
        <taxon>Conifers I</taxon>
        <taxon>Pinales</taxon>
        <taxon>Pinaceae</taxon>
        <taxon>Pinus</taxon>
        <taxon>Pinus subgen. Pinus</taxon>
    </lineage>
</organism>
<name>C75A1_PINTA</name>